<proteinExistence type="inferred from homology"/>
<keyword id="KW-0001">2Fe-2S</keyword>
<keyword id="KW-0963">Cytoplasm</keyword>
<keyword id="KW-0408">Iron</keyword>
<keyword id="KW-0411">Iron-sulfur</keyword>
<keyword id="KW-0479">Metal-binding</keyword>
<keyword id="KW-0560">Oxidoreductase</keyword>
<accession>B5YSG9</accession>
<evidence type="ECO:0000255" key="1">
    <source>
        <dbReference type="HAMAP-Rule" id="MF_00069"/>
    </source>
</evidence>
<dbReference type="EC" id="1.7.99.1" evidence="1"/>
<dbReference type="EMBL" id="CP001164">
    <property type="protein sequence ID" value="ACI37760.1"/>
    <property type="molecule type" value="Genomic_DNA"/>
</dbReference>
<dbReference type="RefSeq" id="WP_000458817.1">
    <property type="nucleotide sequence ID" value="NC_011353.1"/>
</dbReference>
<dbReference type="SMR" id="B5YSG9"/>
<dbReference type="GeneID" id="75202475"/>
<dbReference type="KEGG" id="ecf:ECH74115_1034"/>
<dbReference type="HOGENOM" id="CLU_038344_2_0_6"/>
<dbReference type="GO" id="GO:0005737">
    <property type="term" value="C:cytoplasm"/>
    <property type="evidence" value="ECO:0007669"/>
    <property type="project" value="UniProtKB-SubCell"/>
</dbReference>
<dbReference type="GO" id="GO:0051537">
    <property type="term" value="F:2 iron, 2 sulfur cluster binding"/>
    <property type="evidence" value="ECO:0007669"/>
    <property type="project" value="UniProtKB-KW"/>
</dbReference>
<dbReference type="GO" id="GO:0050418">
    <property type="term" value="F:hydroxylamine reductase activity"/>
    <property type="evidence" value="ECO:0007669"/>
    <property type="project" value="UniProtKB-UniRule"/>
</dbReference>
<dbReference type="GO" id="GO:0046872">
    <property type="term" value="F:metal ion binding"/>
    <property type="evidence" value="ECO:0007669"/>
    <property type="project" value="UniProtKB-KW"/>
</dbReference>
<dbReference type="GO" id="GO:0004601">
    <property type="term" value="F:peroxidase activity"/>
    <property type="evidence" value="ECO:0007669"/>
    <property type="project" value="TreeGrafter"/>
</dbReference>
<dbReference type="GO" id="GO:0042542">
    <property type="term" value="P:response to hydrogen peroxide"/>
    <property type="evidence" value="ECO:0007669"/>
    <property type="project" value="TreeGrafter"/>
</dbReference>
<dbReference type="CDD" id="cd01914">
    <property type="entry name" value="HCP"/>
    <property type="match status" value="1"/>
</dbReference>
<dbReference type="FunFam" id="1.20.1270.20:FF:000001">
    <property type="entry name" value="Hydroxylamine reductase"/>
    <property type="match status" value="1"/>
</dbReference>
<dbReference type="FunFam" id="1.20.1270.20:FF:000002">
    <property type="entry name" value="Hydroxylamine reductase"/>
    <property type="match status" value="1"/>
</dbReference>
<dbReference type="FunFam" id="3.40.50.2030:FF:000001">
    <property type="entry name" value="Hydroxylamine reductase"/>
    <property type="match status" value="1"/>
</dbReference>
<dbReference type="FunFam" id="3.40.50.2030:FF:000002">
    <property type="entry name" value="Hydroxylamine reductase"/>
    <property type="match status" value="1"/>
</dbReference>
<dbReference type="Gene3D" id="1.20.1270.20">
    <property type="match status" value="2"/>
</dbReference>
<dbReference type="Gene3D" id="3.40.50.2030">
    <property type="match status" value="2"/>
</dbReference>
<dbReference type="HAMAP" id="MF_00069">
    <property type="entry name" value="Hydroxylam_reduct"/>
    <property type="match status" value="1"/>
</dbReference>
<dbReference type="InterPro" id="IPR004137">
    <property type="entry name" value="HCP/CODH"/>
</dbReference>
<dbReference type="InterPro" id="IPR010048">
    <property type="entry name" value="Hydroxylam_reduct"/>
</dbReference>
<dbReference type="InterPro" id="IPR016099">
    <property type="entry name" value="Prismane-like_a/b-sand"/>
</dbReference>
<dbReference type="InterPro" id="IPR011254">
    <property type="entry name" value="Prismane-like_sf"/>
</dbReference>
<dbReference type="InterPro" id="IPR016100">
    <property type="entry name" value="Prismane_a-bundle"/>
</dbReference>
<dbReference type="NCBIfam" id="TIGR01703">
    <property type="entry name" value="hybrid_clust"/>
    <property type="match status" value="1"/>
</dbReference>
<dbReference type="NCBIfam" id="NF003658">
    <property type="entry name" value="PRK05290.1"/>
    <property type="match status" value="1"/>
</dbReference>
<dbReference type="PANTHER" id="PTHR30109">
    <property type="entry name" value="HYDROXYLAMINE REDUCTASE"/>
    <property type="match status" value="1"/>
</dbReference>
<dbReference type="PANTHER" id="PTHR30109:SF0">
    <property type="entry name" value="HYDROXYLAMINE REDUCTASE"/>
    <property type="match status" value="1"/>
</dbReference>
<dbReference type="Pfam" id="PF03063">
    <property type="entry name" value="Prismane"/>
    <property type="match status" value="1"/>
</dbReference>
<dbReference type="PIRSF" id="PIRSF000076">
    <property type="entry name" value="HCP"/>
    <property type="match status" value="1"/>
</dbReference>
<dbReference type="SUPFAM" id="SSF56821">
    <property type="entry name" value="Prismane protein-like"/>
    <property type="match status" value="1"/>
</dbReference>
<comment type="function">
    <text evidence="1">Catalyzes the reduction of hydroxylamine to form NH(3) and H(2)O.</text>
</comment>
<comment type="catalytic activity">
    <reaction evidence="1">
        <text>A + NH4(+) + H2O = hydroxylamine + AH2 + H(+)</text>
        <dbReference type="Rhea" id="RHEA:22052"/>
        <dbReference type="ChEBI" id="CHEBI:13193"/>
        <dbReference type="ChEBI" id="CHEBI:15377"/>
        <dbReference type="ChEBI" id="CHEBI:15378"/>
        <dbReference type="ChEBI" id="CHEBI:15429"/>
        <dbReference type="ChEBI" id="CHEBI:17499"/>
        <dbReference type="ChEBI" id="CHEBI:28938"/>
        <dbReference type="EC" id="1.7.99.1"/>
    </reaction>
</comment>
<comment type="cofactor">
    <cofactor evidence="1">
        <name>[2Fe-2S] cluster</name>
        <dbReference type="ChEBI" id="CHEBI:190135"/>
    </cofactor>
    <text evidence="1">Binds 1 [2Fe-2S] cluster.</text>
</comment>
<comment type="cofactor">
    <cofactor evidence="1">
        <name>hybrid [4Fe-2O-2S] cluster</name>
        <dbReference type="ChEBI" id="CHEBI:60519"/>
    </cofactor>
    <text evidence="1">Binds 1 hybrid [4Fe-2O-2S] cluster.</text>
</comment>
<comment type="subcellular location">
    <subcellularLocation>
        <location evidence="1">Cytoplasm</location>
    </subcellularLocation>
</comment>
<comment type="similarity">
    <text evidence="1">Belongs to the HCP family.</text>
</comment>
<sequence>MFCVQCEQTIRTPAGNGCSYAQGMCGKTAETSDLQDLLIAALQGLSAWAVKAREYGIINHDVDSFAPRAFFSTLTNVNFDSPRIVGYAREAIALREALKAQCLAVDANARVDNPMADLQLVSDDLGELQRQAAEFTPNKDKAAIGENILGLRLLCLYGLKGAAAYMEHAHVLGQYDNDIYAQYHKIMAWLGTWPADMNALLECSMEIGQMNFKVMSILDAGETGKYGHPTPTQVNVKATAGKCILISGHDLKDLYNLLEQTEGTGVNVYTHGEMLPAHGYPELRKFKHLVGNYGSGWQNQQVEFARFPGPIVMTSNCIIDPTVGAYDDRIWTRSIVGWPGVRHLDGEDFSAVIAQAQQMAGFPYSEIPHLITVGFGRQTLLGAADTLIDLVSREKLRHIFLLGGCDGARGERHYFTDFATSVPDDCLILTLACGKYRFNKLEFGDIEGLPRLVDAGQCNDAYSAIILAVTLAEKLGCGVNDLPLSLVLSWFEQKAIVILLTLLSLGVKNIVTGPTAPGFLTPDLLAVLNEKFGLRSITTVEEDMKQLLSA</sequence>
<feature type="chain" id="PRO_1000092335" description="Hydroxylamine reductase">
    <location>
        <begin position="1"/>
        <end position="550"/>
    </location>
</feature>
<feature type="binding site" evidence="1">
    <location>
        <position position="3"/>
    </location>
    <ligand>
        <name>[2Fe-2S] cluster</name>
        <dbReference type="ChEBI" id="CHEBI:190135"/>
    </ligand>
</feature>
<feature type="binding site" evidence="1">
    <location>
        <position position="6"/>
    </location>
    <ligand>
        <name>[2Fe-2S] cluster</name>
        <dbReference type="ChEBI" id="CHEBI:190135"/>
    </ligand>
</feature>
<feature type="binding site" evidence="1">
    <location>
        <position position="18"/>
    </location>
    <ligand>
        <name>[2Fe-2S] cluster</name>
        <dbReference type="ChEBI" id="CHEBI:190135"/>
    </ligand>
</feature>
<feature type="binding site" evidence="1">
    <location>
        <position position="25"/>
    </location>
    <ligand>
        <name>[2Fe-2S] cluster</name>
        <dbReference type="ChEBI" id="CHEBI:190135"/>
    </ligand>
</feature>
<feature type="binding site" evidence="1">
    <location>
        <position position="249"/>
    </location>
    <ligand>
        <name>hybrid [4Fe-2O-2S] cluster</name>
        <dbReference type="ChEBI" id="CHEBI:60519"/>
    </ligand>
</feature>
<feature type="binding site" evidence="1">
    <location>
        <position position="273"/>
    </location>
    <ligand>
        <name>hybrid [4Fe-2O-2S] cluster</name>
        <dbReference type="ChEBI" id="CHEBI:60519"/>
    </ligand>
</feature>
<feature type="binding site" evidence="1">
    <location>
        <position position="317"/>
    </location>
    <ligand>
        <name>hybrid [4Fe-2O-2S] cluster</name>
        <dbReference type="ChEBI" id="CHEBI:60519"/>
    </ligand>
</feature>
<feature type="binding site" description="via persulfide group" evidence="1">
    <location>
        <position position="405"/>
    </location>
    <ligand>
        <name>hybrid [4Fe-2O-2S] cluster</name>
        <dbReference type="ChEBI" id="CHEBI:60519"/>
    </ligand>
</feature>
<feature type="binding site" evidence="1">
    <location>
        <position position="433"/>
    </location>
    <ligand>
        <name>hybrid [4Fe-2O-2S] cluster</name>
        <dbReference type="ChEBI" id="CHEBI:60519"/>
    </ligand>
</feature>
<feature type="binding site" evidence="1">
    <location>
        <position position="458"/>
    </location>
    <ligand>
        <name>hybrid [4Fe-2O-2S] cluster</name>
        <dbReference type="ChEBI" id="CHEBI:60519"/>
    </ligand>
</feature>
<feature type="binding site" evidence="1">
    <location>
        <position position="492"/>
    </location>
    <ligand>
        <name>hybrid [4Fe-2O-2S] cluster</name>
        <dbReference type="ChEBI" id="CHEBI:60519"/>
    </ligand>
</feature>
<feature type="binding site" evidence="1">
    <location>
        <position position="494"/>
    </location>
    <ligand>
        <name>hybrid [4Fe-2O-2S] cluster</name>
        <dbReference type="ChEBI" id="CHEBI:60519"/>
    </ligand>
</feature>
<feature type="modified residue" description="Cysteine persulfide" evidence="1">
    <location>
        <position position="405"/>
    </location>
</feature>
<reference key="1">
    <citation type="journal article" date="2011" name="Proc. Natl. Acad. Sci. U.S.A.">
        <title>Genomic anatomy of Escherichia coli O157:H7 outbreaks.</title>
        <authorList>
            <person name="Eppinger M."/>
            <person name="Mammel M.K."/>
            <person name="Leclerc J.E."/>
            <person name="Ravel J."/>
            <person name="Cebula T.A."/>
        </authorList>
    </citation>
    <scope>NUCLEOTIDE SEQUENCE [LARGE SCALE GENOMIC DNA]</scope>
    <source>
        <strain>EC4115 / EHEC</strain>
    </source>
</reference>
<protein>
    <recommendedName>
        <fullName evidence="1">Hydroxylamine reductase</fullName>
        <ecNumber evidence="1">1.7.99.1</ecNumber>
    </recommendedName>
    <alternativeName>
        <fullName evidence="1">Hybrid-cluster protein</fullName>
        <shortName evidence="1">HCP</shortName>
    </alternativeName>
    <alternativeName>
        <fullName evidence="1">Prismane protein</fullName>
    </alternativeName>
</protein>
<name>HCP_ECO5E</name>
<organism>
    <name type="scientific">Escherichia coli O157:H7 (strain EC4115 / EHEC)</name>
    <dbReference type="NCBI Taxonomy" id="444450"/>
    <lineage>
        <taxon>Bacteria</taxon>
        <taxon>Pseudomonadati</taxon>
        <taxon>Pseudomonadota</taxon>
        <taxon>Gammaproteobacteria</taxon>
        <taxon>Enterobacterales</taxon>
        <taxon>Enterobacteriaceae</taxon>
        <taxon>Escherichia</taxon>
    </lineage>
</organism>
<gene>
    <name evidence="1" type="primary">hcp</name>
    <name type="ordered locus">ECH74115_1034</name>
</gene>